<protein>
    <recommendedName>
        <fullName evidence="1">Adenylyl-sulfate kinase</fullName>
        <ecNumber evidence="1">2.7.1.25</ecNumber>
    </recommendedName>
    <alternativeName>
        <fullName evidence="1">APS kinase</fullName>
    </alternativeName>
    <alternativeName>
        <fullName evidence="1">ATP adenosine-5'-phosphosulfate 3'-phosphotransferase</fullName>
    </alternativeName>
    <alternativeName>
        <fullName evidence="1">Adenosine-5'-phosphosulfate kinase</fullName>
    </alternativeName>
</protein>
<dbReference type="EC" id="2.7.1.25" evidence="1"/>
<dbReference type="EMBL" id="AM295250">
    <property type="protein sequence ID" value="CAL26978.1"/>
    <property type="molecule type" value="Genomic_DNA"/>
</dbReference>
<dbReference type="RefSeq" id="WP_012664093.1">
    <property type="nucleotide sequence ID" value="NC_012121.1"/>
</dbReference>
<dbReference type="SMR" id="B9DLK2"/>
<dbReference type="GeneID" id="93794976"/>
<dbReference type="KEGG" id="sca:SCA_0064"/>
<dbReference type="eggNOG" id="COG0529">
    <property type="taxonomic scope" value="Bacteria"/>
</dbReference>
<dbReference type="HOGENOM" id="CLU_046932_1_0_9"/>
<dbReference type="OrthoDB" id="9804504at2"/>
<dbReference type="BioCyc" id="SCAR396513:SCA_RS00305-MONOMER"/>
<dbReference type="UniPathway" id="UPA00140">
    <property type="reaction ID" value="UER00205"/>
</dbReference>
<dbReference type="Proteomes" id="UP000000444">
    <property type="component" value="Chromosome"/>
</dbReference>
<dbReference type="GO" id="GO:0004020">
    <property type="term" value="F:adenylylsulfate kinase activity"/>
    <property type="evidence" value="ECO:0007669"/>
    <property type="project" value="UniProtKB-UniRule"/>
</dbReference>
<dbReference type="GO" id="GO:0005524">
    <property type="term" value="F:ATP binding"/>
    <property type="evidence" value="ECO:0007669"/>
    <property type="project" value="UniProtKB-UniRule"/>
</dbReference>
<dbReference type="GO" id="GO:0070814">
    <property type="term" value="P:hydrogen sulfide biosynthetic process"/>
    <property type="evidence" value="ECO:0007669"/>
    <property type="project" value="UniProtKB-UniRule"/>
</dbReference>
<dbReference type="GO" id="GO:0000103">
    <property type="term" value="P:sulfate assimilation"/>
    <property type="evidence" value="ECO:0007669"/>
    <property type="project" value="UniProtKB-UniRule"/>
</dbReference>
<dbReference type="CDD" id="cd02027">
    <property type="entry name" value="APSK"/>
    <property type="match status" value="1"/>
</dbReference>
<dbReference type="FunFam" id="3.40.50.300:FF:000212">
    <property type="entry name" value="Adenylyl-sulfate kinase"/>
    <property type="match status" value="1"/>
</dbReference>
<dbReference type="Gene3D" id="3.40.50.300">
    <property type="entry name" value="P-loop containing nucleotide triphosphate hydrolases"/>
    <property type="match status" value="1"/>
</dbReference>
<dbReference type="HAMAP" id="MF_00065">
    <property type="entry name" value="Adenylyl_sulf_kinase"/>
    <property type="match status" value="1"/>
</dbReference>
<dbReference type="InterPro" id="IPR002891">
    <property type="entry name" value="APS_kinase"/>
</dbReference>
<dbReference type="InterPro" id="IPR027417">
    <property type="entry name" value="P-loop_NTPase"/>
</dbReference>
<dbReference type="NCBIfam" id="TIGR00455">
    <property type="entry name" value="apsK"/>
    <property type="match status" value="1"/>
</dbReference>
<dbReference type="NCBIfam" id="NF003013">
    <property type="entry name" value="PRK03846.1"/>
    <property type="match status" value="1"/>
</dbReference>
<dbReference type="PANTHER" id="PTHR11055">
    <property type="entry name" value="BIFUNCTIONAL 3'-PHOSPHOADENOSINE 5'-PHOSPHOSULFATE SYNTHASE"/>
    <property type="match status" value="1"/>
</dbReference>
<dbReference type="PANTHER" id="PTHR11055:SF1">
    <property type="entry name" value="PAPS SYNTHETASE, ISOFORM D"/>
    <property type="match status" value="1"/>
</dbReference>
<dbReference type="Pfam" id="PF01583">
    <property type="entry name" value="APS_kinase"/>
    <property type="match status" value="1"/>
</dbReference>
<dbReference type="SUPFAM" id="SSF52540">
    <property type="entry name" value="P-loop containing nucleoside triphosphate hydrolases"/>
    <property type="match status" value="1"/>
</dbReference>
<sequence length="199" mass="22597">MVKSQNITWHDSEVTKNERQEKNGHKSVVLWFTGLSGSGKSTISVALEKALFERGVRSYRLDGDNIRHGLNNNLGFSPEDRKENIRRIGEVSKLLSDAGLITLTAFISPYREDRDHVREILEDGEFVEVYTKASVAACEERDPKQLYKKVRAGEIKNFTGIDAPYEAPEDPEIIVDTEENSVEEAVEQIIQYLEDQKVI</sequence>
<gene>
    <name evidence="1" type="primary">cysC</name>
    <name type="ordered locus">Sca_0064</name>
</gene>
<comment type="function">
    <text evidence="1">Catalyzes the synthesis of activated sulfate.</text>
</comment>
<comment type="catalytic activity">
    <reaction evidence="1">
        <text>adenosine 5'-phosphosulfate + ATP = 3'-phosphoadenylyl sulfate + ADP + H(+)</text>
        <dbReference type="Rhea" id="RHEA:24152"/>
        <dbReference type="ChEBI" id="CHEBI:15378"/>
        <dbReference type="ChEBI" id="CHEBI:30616"/>
        <dbReference type="ChEBI" id="CHEBI:58243"/>
        <dbReference type="ChEBI" id="CHEBI:58339"/>
        <dbReference type="ChEBI" id="CHEBI:456216"/>
        <dbReference type="EC" id="2.7.1.25"/>
    </reaction>
</comment>
<comment type="pathway">
    <text evidence="1">Sulfur metabolism; hydrogen sulfide biosynthesis; sulfite from sulfate: step 2/3.</text>
</comment>
<comment type="similarity">
    <text evidence="1">Belongs to the APS kinase family.</text>
</comment>
<accession>B9DLK2</accession>
<name>CYSC_STACT</name>
<organism>
    <name type="scientific">Staphylococcus carnosus (strain TM300)</name>
    <dbReference type="NCBI Taxonomy" id="396513"/>
    <lineage>
        <taxon>Bacteria</taxon>
        <taxon>Bacillati</taxon>
        <taxon>Bacillota</taxon>
        <taxon>Bacilli</taxon>
        <taxon>Bacillales</taxon>
        <taxon>Staphylococcaceae</taxon>
        <taxon>Staphylococcus</taxon>
    </lineage>
</organism>
<reference key="1">
    <citation type="journal article" date="2009" name="Appl. Environ. Microbiol.">
        <title>Genome analysis of the meat starter culture bacterium Staphylococcus carnosus TM300.</title>
        <authorList>
            <person name="Rosenstein R."/>
            <person name="Nerz C."/>
            <person name="Biswas L."/>
            <person name="Resch A."/>
            <person name="Raddatz G."/>
            <person name="Schuster S.C."/>
            <person name="Goetz F."/>
        </authorList>
    </citation>
    <scope>NUCLEOTIDE SEQUENCE [LARGE SCALE GENOMIC DNA]</scope>
    <source>
        <strain>TM300</strain>
    </source>
</reference>
<feature type="chain" id="PRO_1000117958" description="Adenylyl-sulfate kinase">
    <location>
        <begin position="1"/>
        <end position="199"/>
    </location>
</feature>
<feature type="active site" description="Phosphoserine intermediate" evidence="1">
    <location>
        <position position="108"/>
    </location>
</feature>
<feature type="binding site" evidence="1">
    <location>
        <begin position="34"/>
        <end position="41"/>
    </location>
    <ligand>
        <name>ATP</name>
        <dbReference type="ChEBI" id="CHEBI:30616"/>
    </ligand>
</feature>
<proteinExistence type="inferred from homology"/>
<evidence type="ECO:0000255" key="1">
    <source>
        <dbReference type="HAMAP-Rule" id="MF_00065"/>
    </source>
</evidence>
<keyword id="KW-0067">ATP-binding</keyword>
<keyword id="KW-0418">Kinase</keyword>
<keyword id="KW-0547">Nucleotide-binding</keyword>
<keyword id="KW-0597">Phosphoprotein</keyword>
<keyword id="KW-1185">Reference proteome</keyword>
<keyword id="KW-0808">Transferase</keyword>